<accession>Q9TEC1</accession>
<gene>
    <name type="primary">MT-CYB</name>
    <name type="synonym">COB</name>
    <name type="synonym">CYTB</name>
    <name type="synonym">MTCYB</name>
</gene>
<dbReference type="EMBL" id="AB012104">
    <property type="protein sequence ID" value="BAA79209.1"/>
    <property type="molecule type" value="Genomic_DNA"/>
</dbReference>
<dbReference type="RefSeq" id="NP_008776.1">
    <property type="nucleotide sequence ID" value="NC_000886.1"/>
</dbReference>
<dbReference type="SMR" id="Q9TEC1"/>
<dbReference type="GeneID" id="808644"/>
<dbReference type="KEGG" id="cmy:808644"/>
<dbReference type="CTD" id="4519"/>
<dbReference type="OrthoDB" id="244at2759"/>
<dbReference type="GO" id="GO:0005743">
    <property type="term" value="C:mitochondrial inner membrane"/>
    <property type="evidence" value="ECO:0007669"/>
    <property type="project" value="UniProtKB-SubCell"/>
</dbReference>
<dbReference type="GO" id="GO:0045275">
    <property type="term" value="C:respiratory chain complex III"/>
    <property type="evidence" value="ECO:0007669"/>
    <property type="project" value="InterPro"/>
</dbReference>
<dbReference type="GO" id="GO:0046872">
    <property type="term" value="F:metal ion binding"/>
    <property type="evidence" value="ECO:0007669"/>
    <property type="project" value="UniProtKB-KW"/>
</dbReference>
<dbReference type="GO" id="GO:0008121">
    <property type="term" value="F:ubiquinol-cytochrome-c reductase activity"/>
    <property type="evidence" value="ECO:0007669"/>
    <property type="project" value="InterPro"/>
</dbReference>
<dbReference type="GO" id="GO:0006122">
    <property type="term" value="P:mitochondrial electron transport, ubiquinol to cytochrome c"/>
    <property type="evidence" value="ECO:0007669"/>
    <property type="project" value="TreeGrafter"/>
</dbReference>
<dbReference type="CDD" id="cd00290">
    <property type="entry name" value="cytochrome_b_C"/>
    <property type="match status" value="1"/>
</dbReference>
<dbReference type="CDD" id="cd00284">
    <property type="entry name" value="Cytochrome_b_N"/>
    <property type="match status" value="1"/>
</dbReference>
<dbReference type="FunFam" id="1.20.810.10:FF:000002">
    <property type="entry name" value="Cytochrome b"/>
    <property type="match status" value="1"/>
</dbReference>
<dbReference type="Gene3D" id="1.20.810.10">
    <property type="entry name" value="Cytochrome Bc1 Complex, Chain C"/>
    <property type="match status" value="1"/>
</dbReference>
<dbReference type="InterPro" id="IPR005798">
    <property type="entry name" value="Cyt_b/b6_C"/>
</dbReference>
<dbReference type="InterPro" id="IPR036150">
    <property type="entry name" value="Cyt_b/b6_C_sf"/>
</dbReference>
<dbReference type="InterPro" id="IPR005797">
    <property type="entry name" value="Cyt_b/b6_N"/>
</dbReference>
<dbReference type="InterPro" id="IPR027387">
    <property type="entry name" value="Cytb/b6-like_sf"/>
</dbReference>
<dbReference type="InterPro" id="IPR030689">
    <property type="entry name" value="Cytochrome_b"/>
</dbReference>
<dbReference type="InterPro" id="IPR048260">
    <property type="entry name" value="Cytochrome_b_C_euk/bac"/>
</dbReference>
<dbReference type="InterPro" id="IPR048259">
    <property type="entry name" value="Cytochrome_b_N_euk/bac"/>
</dbReference>
<dbReference type="InterPro" id="IPR016174">
    <property type="entry name" value="Di-haem_cyt_TM"/>
</dbReference>
<dbReference type="PANTHER" id="PTHR19271">
    <property type="entry name" value="CYTOCHROME B"/>
    <property type="match status" value="1"/>
</dbReference>
<dbReference type="PANTHER" id="PTHR19271:SF16">
    <property type="entry name" value="CYTOCHROME B"/>
    <property type="match status" value="1"/>
</dbReference>
<dbReference type="Pfam" id="PF00032">
    <property type="entry name" value="Cytochrom_B_C"/>
    <property type="match status" value="1"/>
</dbReference>
<dbReference type="Pfam" id="PF00033">
    <property type="entry name" value="Cytochrome_B"/>
    <property type="match status" value="1"/>
</dbReference>
<dbReference type="PIRSF" id="PIRSF038885">
    <property type="entry name" value="COB"/>
    <property type="match status" value="1"/>
</dbReference>
<dbReference type="SUPFAM" id="SSF81648">
    <property type="entry name" value="a domain/subunit of cytochrome bc1 complex (Ubiquinol-cytochrome c reductase)"/>
    <property type="match status" value="1"/>
</dbReference>
<dbReference type="SUPFAM" id="SSF81342">
    <property type="entry name" value="Transmembrane di-heme cytochromes"/>
    <property type="match status" value="1"/>
</dbReference>
<dbReference type="PROSITE" id="PS51003">
    <property type="entry name" value="CYTB_CTER"/>
    <property type="match status" value="1"/>
</dbReference>
<dbReference type="PROSITE" id="PS51002">
    <property type="entry name" value="CYTB_NTER"/>
    <property type="match status" value="1"/>
</dbReference>
<feature type="chain" id="PRO_0000060775" description="Cytochrome b">
    <location>
        <begin position="1"/>
        <end position="381"/>
    </location>
</feature>
<feature type="transmembrane region" description="Helical" evidence="2">
    <location>
        <begin position="34"/>
        <end position="54"/>
    </location>
</feature>
<feature type="transmembrane region" description="Helical" evidence="2">
    <location>
        <begin position="78"/>
        <end position="99"/>
    </location>
</feature>
<feature type="transmembrane region" description="Helical" evidence="2">
    <location>
        <begin position="114"/>
        <end position="134"/>
    </location>
</feature>
<feature type="transmembrane region" description="Helical" evidence="2">
    <location>
        <begin position="179"/>
        <end position="199"/>
    </location>
</feature>
<feature type="transmembrane region" description="Helical" evidence="2">
    <location>
        <begin position="227"/>
        <end position="247"/>
    </location>
</feature>
<feature type="transmembrane region" description="Helical" evidence="2">
    <location>
        <begin position="289"/>
        <end position="309"/>
    </location>
</feature>
<feature type="transmembrane region" description="Helical" evidence="2">
    <location>
        <begin position="321"/>
        <end position="341"/>
    </location>
</feature>
<feature type="transmembrane region" description="Helical" evidence="2">
    <location>
        <begin position="348"/>
        <end position="368"/>
    </location>
</feature>
<feature type="binding site" description="axial binding residue" evidence="2">
    <location>
        <position position="84"/>
    </location>
    <ligand>
        <name>heme b</name>
        <dbReference type="ChEBI" id="CHEBI:60344"/>
        <label>b562</label>
    </ligand>
    <ligandPart>
        <name>Fe</name>
        <dbReference type="ChEBI" id="CHEBI:18248"/>
    </ligandPart>
</feature>
<feature type="binding site" description="axial binding residue" evidence="2">
    <location>
        <position position="98"/>
    </location>
    <ligand>
        <name>heme b</name>
        <dbReference type="ChEBI" id="CHEBI:60344"/>
        <label>b566</label>
    </ligand>
    <ligandPart>
        <name>Fe</name>
        <dbReference type="ChEBI" id="CHEBI:18248"/>
    </ligandPart>
</feature>
<feature type="binding site" description="axial binding residue" evidence="2">
    <location>
        <position position="183"/>
    </location>
    <ligand>
        <name>heme b</name>
        <dbReference type="ChEBI" id="CHEBI:60344"/>
        <label>b562</label>
    </ligand>
    <ligandPart>
        <name>Fe</name>
        <dbReference type="ChEBI" id="CHEBI:18248"/>
    </ligandPart>
</feature>
<feature type="binding site" description="axial binding residue" evidence="2">
    <location>
        <position position="197"/>
    </location>
    <ligand>
        <name>heme b</name>
        <dbReference type="ChEBI" id="CHEBI:60344"/>
        <label>b566</label>
    </ligand>
    <ligandPart>
        <name>Fe</name>
        <dbReference type="ChEBI" id="CHEBI:18248"/>
    </ligandPart>
</feature>
<feature type="binding site" evidence="2">
    <location>
        <position position="202"/>
    </location>
    <ligand>
        <name>a ubiquinone</name>
        <dbReference type="ChEBI" id="CHEBI:16389"/>
    </ligand>
</feature>
<name>CYB_CHEMY</name>
<proteinExistence type="inferred from homology"/>
<geneLocation type="mitochondrion"/>
<sequence>MATNLRKTHPMMKIINNLVIDLPSPSNISAWWNFGSLLATCLALQIITGIFLAMHYSPDISMAFSSIAHITRDVQYGWLIRNMHANGASLFFMCIYLHIGRGIYYGSYLYKETWNTGIILLLLVMATAFVGYVLPWGQMSFWGATVITNLLSAIPYIGNTLVQWIWGGFSVDNATLTRFFTFHFLLPFAITGLTAVHLLFLHETGSNNPTGLNSNTDKIPFHPYFSYKDLLGLILMLTFLLTLTLFSPYLLGDPDNFTPANPLSTPPHIKPEWYFLFAYAILRSIPNKLGGVLALLFSILILFLMPTLHTSKQRTASFRPLTQILFWSLVADLLVLTWIGGQPVEDPFIIIGQVASTFYFLILLLLMPAAGMIENKMLNLK</sequence>
<protein>
    <recommendedName>
        <fullName>Cytochrome b</fullName>
    </recommendedName>
    <alternativeName>
        <fullName>Complex III subunit 3</fullName>
    </alternativeName>
    <alternativeName>
        <fullName>Complex III subunit III</fullName>
    </alternativeName>
    <alternativeName>
        <fullName>Cytochrome b-c1 complex subunit 3</fullName>
    </alternativeName>
    <alternativeName>
        <fullName>Ubiquinol-cytochrome-c reductase complex cytochrome b subunit</fullName>
    </alternativeName>
</protein>
<evidence type="ECO:0000250" key="1"/>
<evidence type="ECO:0000250" key="2">
    <source>
        <dbReference type="UniProtKB" id="P00157"/>
    </source>
</evidence>
<evidence type="ECO:0000255" key="3">
    <source>
        <dbReference type="PROSITE-ProRule" id="PRU00967"/>
    </source>
</evidence>
<evidence type="ECO:0000255" key="4">
    <source>
        <dbReference type="PROSITE-ProRule" id="PRU00968"/>
    </source>
</evidence>
<keyword id="KW-0249">Electron transport</keyword>
<keyword id="KW-0349">Heme</keyword>
<keyword id="KW-0408">Iron</keyword>
<keyword id="KW-0472">Membrane</keyword>
<keyword id="KW-0479">Metal-binding</keyword>
<keyword id="KW-0496">Mitochondrion</keyword>
<keyword id="KW-0999">Mitochondrion inner membrane</keyword>
<keyword id="KW-0679">Respiratory chain</keyword>
<keyword id="KW-0812">Transmembrane</keyword>
<keyword id="KW-1133">Transmembrane helix</keyword>
<keyword id="KW-0813">Transport</keyword>
<keyword id="KW-0830">Ubiquinone</keyword>
<organism>
    <name type="scientific">Chelonia mydas</name>
    <name type="common">Green sea-turtle</name>
    <name type="synonym">Chelonia agassizi</name>
    <dbReference type="NCBI Taxonomy" id="8469"/>
    <lineage>
        <taxon>Eukaryota</taxon>
        <taxon>Metazoa</taxon>
        <taxon>Chordata</taxon>
        <taxon>Craniata</taxon>
        <taxon>Vertebrata</taxon>
        <taxon>Euteleostomi</taxon>
        <taxon>Archelosauria</taxon>
        <taxon>Testudinata</taxon>
        <taxon>Testudines</taxon>
        <taxon>Cryptodira</taxon>
        <taxon>Durocryptodira</taxon>
        <taxon>Americhelydia</taxon>
        <taxon>Chelonioidea</taxon>
        <taxon>Cheloniidae</taxon>
        <taxon>Chelonia</taxon>
    </lineage>
</organism>
<reference key="1">
    <citation type="journal article" date="1999" name="Mol. Biol. Evol.">
        <title>Complete mitochondrial DNA sequences of the green turtle and blue-tailed mole skink: statistical evidence for archosaurian affinity of turtles.</title>
        <authorList>
            <person name="Kumazawa Y."/>
            <person name="Nishida M."/>
        </authorList>
    </citation>
    <scope>NUCLEOTIDE SEQUENCE [GENOMIC DNA]</scope>
</reference>
<comment type="function">
    <text evidence="2">Component of the ubiquinol-cytochrome c reductase complex (complex III or cytochrome b-c1 complex) that is part of the mitochondrial respiratory chain. The b-c1 complex mediates electron transfer from ubiquinol to cytochrome c. Contributes to the generation of a proton gradient across the mitochondrial membrane that is then used for ATP synthesis.</text>
</comment>
<comment type="cofactor">
    <cofactor evidence="2">
        <name>heme b</name>
        <dbReference type="ChEBI" id="CHEBI:60344"/>
    </cofactor>
    <text evidence="2">Binds 2 heme b groups non-covalently.</text>
</comment>
<comment type="subunit">
    <text evidence="2">The cytochrome bc1 complex contains 3 respiratory subunits (MT-CYB, CYC1 and UQCRFS1), 2 core proteins (UQCRC1 and UQCRC2) and probably 6 low-molecular weight proteins.</text>
</comment>
<comment type="subcellular location">
    <subcellularLocation>
        <location evidence="2">Mitochondrion inner membrane</location>
        <topology evidence="2">Multi-pass membrane protein</topology>
    </subcellularLocation>
</comment>
<comment type="miscellaneous">
    <text evidence="1">Heme 1 (or BL or b562) is low-potential and absorbs at about 562 nm, and heme 2 (or BH or b566) is high-potential and absorbs at about 566 nm.</text>
</comment>
<comment type="similarity">
    <text evidence="3 4">Belongs to the cytochrome b family.</text>
</comment>
<comment type="caution">
    <text evidence="2">The full-length protein contains only eight transmembrane helices, not nine as predicted by bioinformatics tools.</text>
</comment>